<proteinExistence type="predicted"/>
<reference key="1">
    <citation type="journal article" date="2004" name="Science">
        <title>The 1.2-megabase genome sequence of Mimivirus.</title>
        <authorList>
            <person name="Raoult D."/>
            <person name="Audic S."/>
            <person name="Robert C."/>
            <person name="Abergel C."/>
            <person name="Renesto P."/>
            <person name="Ogata H."/>
            <person name="La Scola B."/>
            <person name="Susan M."/>
            <person name="Claverie J.-M."/>
        </authorList>
    </citation>
    <scope>NUCLEOTIDE SEQUENCE [LARGE SCALE GENOMIC DNA]</scope>
    <source>
        <strain>Rowbotham-Bradford</strain>
    </source>
</reference>
<keyword id="KW-1185">Reference proteome</keyword>
<feature type="chain" id="PRO_0000247394" description="Uncharacterized protein R348">
    <location>
        <begin position="1"/>
        <end position="705"/>
    </location>
</feature>
<gene>
    <name type="ordered locus">MIMI_R348</name>
</gene>
<sequence length="705" mass="82624">MSIPVILNKSNSNISTVNTIVENTIKNIFIDDNNIYVTDSNDILYLYNNYQFYPFTSKMKRIQNCFMIDSETFIVHHSSTISIFDKNYVKIDQEVDTWITNNIDRVAYDIDFGLVATLENGDIYVNFGVGNNENNYGSSDINRLCLNTICSDNNKYLRTKFHSYEDMKIISKTLIAHKENTIDIFFLYTNTVKYIRSAYIDSESFGKIIEFNSILNYFVSTDFNPYFLTETPEIYKDTNNFFFPKIPYYFSIIDNNLYCYHTKNYYDKLIPPLMSILSVSTNTTTILPHNNWLTVLVLPENSSSKIVFTSIENQVLIHNGQFYSIKNDYQHIVFDEILINYDTINSMYIDKSNVEFVIDIEQDVPVIDQLINIIPNIYRLNNKYIYYFEQIDKKGSIVSYGDGVSRFVFNSLRREIDEILATKFEYCDTGMAIKLGKMMYFCNVDGSETFENIHPYFFFTMSKESDYTYLLKKFKSASYNIYYNQWIQYKNNPQTLVELGLGLNNSNDYIRYLMTSDLNEEQINLYNNFIDGYLFFMNRTSIYDIVKNYPISYYVNKLLFEGYFELSVQFRKESDDVNDNDYDEFCALFDNIFKELSHREMSCISQNVTGSNYYVGEITVVYSFTNNKLQKQVYDGSTIIPEEEGVSAVENPIESIDTTDNYDDSDISYQISTCNTELVVNIPPNENLIRKLFDILVVEDTYLKN</sequence>
<name>YR348_MIMIV</name>
<organismHost>
    <name type="scientific">Acanthamoeba polyphaga</name>
    <name type="common">Amoeba</name>
    <dbReference type="NCBI Taxonomy" id="5757"/>
</organismHost>
<dbReference type="EMBL" id="AY653733">
    <property type="protein sequence ID" value="AAV50617.1"/>
    <property type="molecule type" value="Genomic_DNA"/>
</dbReference>
<dbReference type="KEGG" id="vg:9924967"/>
<dbReference type="OrthoDB" id="7917at10239"/>
<dbReference type="Proteomes" id="UP000001134">
    <property type="component" value="Genome"/>
</dbReference>
<organism>
    <name type="scientific">Acanthamoeba polyphaga mimivirus</name>
    <name type="common">APMV</name>
    <dbReference type="NCBI Taxonomy" id="212035"/>
    <lineage>
        <taxon>Viruses</taxon>
        <taxon>Varidnaviria</taxon>
        <taxon>Bamfordvirae</taxon>
        <taxon>Nucleocytoviricota</taxon>
        <taxon>Megaviricetes</taxon>
        <taxon>Imitervirales</taxon>
        <taxon>Mimiviridae</taxon>
        <taxon>Megamimivirinae</taxon>
        <taxon>Mimivirus</taxon>
        <taxon>Mimivirus bradfordmassiliense</taxon>
    </lineage>
</organism>
<protein>
    <recommendedName>
        <fullName>Uncharacterized protein R348</fullName>
    </recommendedName>
</protein>
<accession>Q5UQU4</accession>